<gene>
    <name evidence="1" type="primary">greA</name>
    <name type="ordered locus">lwe1509</name>
</gene>
<dbReference type="EMBL" id="AM263198">
    <property type="protein sequence ID" value="CAK20927.1"/>
    <property type="molecule type" value="Genomic_DNA"/>
</dbReference>
<dbReference type="RefSeq" id="WP_011702299.1">
    <property type="nucleotide sequence ID" value="NC_008555.1"/>
</dbReference>
<dbReference type="SMR" id="A0AIU5"/>
<dbReference type="STRING" id="386043.lwe1509"/>
<dbReference type="GeneID" id="61189385"/>
<dbReference type="KEGG" id="lwe:lwe1509"/>
<dbReference type="eggNOG" id="COG0782">
    <property type="taxonomic scope" value="Bacteria"/>
</dbReference>
<dbReference type="HOGENOM" id="CLU_101379_2_1_9"/>
<dbReference type="OrthoDB" id="9808774at2"/>
<dbReference type="Proteomes" id="UP000000779">
    <property type="component" value="Chromosome"/>
</dbReference>
<dbReference type="GO" id="GO:0003677">
    <property type="term" value="F:DNA binding"/>
    <property type="evidence" value="ECO:0007669"/>
    <property type="project" value="UniProtKB-UniRule"/>
</dbReference>
<dbReference type="GO" id="GO:0070063">
    <property type="term" value="F:RNA polymerase binding"/>
    <property type="evidence" value="ECO:0007669"/>
    <property type="project" value="InterPro"/>
</dbReference>
<dbReference type="GO" id="GO:0006354">
    <property type="term" value="P:DNA-templated transcription elongation"/>
    <property type="evidence" value="ECO:0007669"/>
    <property type="project" value="TreeGrafter"/>
</dbReference>
<dbReference type="GO" id="GO:0032784">
    <property type="term" value="P:regulation of DNA-templated transcription elongation"/>
    <property type="evidence" value="ECO:0007669"/>
    <property type="project" value="UniProtKB-UniRule"/>
</dbReference>
<dbReference type="FunFam" id="1.10.287.180:FF:000001">
    <property type="entry name" value="Transcription elongation factor GreA"/>
    <property type="match status" value="1"/>
</dbReference>
<dbReference type="FunFam" id="3.10.50.30:FF:000001">
    <property type="entry name" value="Transcription elongation factor GreA"/>
    <property type="match status" value="1"/>
</dbReference>
<dbReference type="Gene3D" id="3.10.50.30">
    <property type="entry name" value="Transcription elongation factor, GreA/GreB, C-terminal domain"/>
    <property type="match status" value="1"/>
</dbReference>
<dbReference type="Gene3D" id="1.10.287.180">
    <property type="entry name" value="Transcription elongation factor, GreA/GreB, N-terminal domain"/>
    <property type="match status" value="1"/>
</dbReference>
<dbReference type="HAMAP" id="MF_00105">
    <property type="entry name" value="GreA_GreB"/>
    <property type="match status" value="1"/>
</dbReference>
<dbReference type="InterPro" id="IPR036953">
    <property type="entry name" value="GreA/GreB_C_sf"/>
</dbReference>
<dbReference type="InterPro" id="IPR018151">
    <property type="entry name" value="TF_GreA/GreB_CS"/>
</dbReference>
<dbReference type="InterPro" id="IPR006359">
    <property type="entry name" value="Tscrpt_elong_fac_GreA"/>
</dbReference>
<dbReference type="InterPro" id="IPR028624">
    <property type="entry name" value="Tscrpt_elong_fac_GreA/B"/>
</dbReference>
<dbReference type="InterPro" id="IPR001437">
    <property type="entry name" value="Tscrpt_elong_fac_GreA/B_C"/>
</dbReference>
<dbReference type="InterPro" id="IPR023459">
    <property type="entry name" value="Tscrpt_elong_fac_GreA/B_fam"/>
</dbReference>
<dbReference type="InterPro" id="IPR022691">
    <property type="entry name" value="Tscrpt_elong_fac_GreA/B_N"/>
</dbReference>
<dbReference type="InterPro" id="IPR036805">
    <property type="entry name" value="Tscrpt_elong_fac_GreA/B_N_sf"/>
</dbReference>
<dbReference type="NCBIfam" id="TIGR01462">
    <property type="entry name" value="greA"/>
    <property type="match status" value="1"/>
</dbReference>
<dbReference type="NCBIfam" id="NF001261">
    <property type="entry name" value="PRK00226.1-2"/>
    <property type="match status" value="1"/>
</dbReference>
<dbReference type="NCBIfam" id="NF001263">
    <property type="entry name" value="PRK00226.1-4"/>
    <property type="match status" value="1"/>
</dbReference>
<dbReference type="PANTHER" id="PTHR30437">
    <property type="entry name" value="TRANSCRIPTION ELONGATION FACTOR GREA"/>
    <property type="match status" value="1"/>
</dbReference>
<dbReference type="PANTHER" id="PTHR30437:SF4">
    <property type="entry name" value="TRANSCRIPTION ELONGATION FACTOR GREA"/>
    <property type="match status" value="1"/>
</dbReference>
<dbReference type="Pfam" id="PF01272">
    <property type="entry name" value="GreA_GreB"/>
    <property type="match status" value="1"/>
</dbReference>
<dbReference type="Pfam" id="PF03449">
    <property type="entry name" value="GreA_GreB_N"/>
    <property type="match status" value="1"/>
</dbReference>
<dbReference type="PIRSF" id="PIRSF006092">
    <property type="entry name" value="GreA_GreB"/>
    <property type="match status" value="1"/>
</dbReference>
<dbReference type="SUPFAM" id="SSF54534">
    <property type="entry name" value="FKBP-like"/>
    <property type="match status" value="1"/>
</dbReference>
<dbReference type="SUPFAM" id="SSF46557">
    <property type="entry name" value="GreA transcript cleavage protein, N-terminal domain"/>
    <property type="match status" value="1"/>
</dbReference>
<dbReference type="PROSITE" id="PS00829">
    <property type="entry name" value="GREAB_1"/>
    <property type="match status" value="1"/>
</dbReference>
<dbReference type="PROSITE" id="PS00830">
    <property type="entry name" value="GREAB_2"/>
    <property type="match status" value="1"/>
</dbReference>
<feature type="chain" id="PRO_1000034274" description="Transcription elongation factor GreA">
    <location>
        <begin position="1"/>
        <end position="160"/>
    </location>
</feature>
<feature type="coiled-coil region" evidence="1">
    <location>
        <begin position="10"/>
        <end position="37"/>
    </location>
</feature>
<proteinExistence type="inferred from homology"/>
<sequence>MATEKVFPMTLEGKAKLENELQELKTVKRKEVVERIKIARSFGDLSENSEYDSAKDEQAFVEGRITTIENMIRNAQIIDAAEAHNGLVTLGNTVTFIELPDGEEETYTIVGSAEADPFEGKISNDSPIAKGLLGHKEGEEVTIQTPAGDMNVKIEKITAS</sequence>
<comment type="function">
    <text evidence="1">Necessary for efficient RNA polymerase transcription elongation past template-encoded arresting sites. The arresting sites in DNA have the property of trapping a certain fraction of elongating RNA polymerases that pass through, resulting in locked ternary complexes. Cleavage of the nascent transcript by cleavage factors such as GreA or GreB allows the resumption of elongation from the new 3'terminus. GreA releases sequences of 2 to 3 nucleotides.</text>
</comment>
<comment type="similarity">
    <text evidence="1">Belongs to the GreA/GreB family.</text>
</comment>
<reference key="1">
    <citation type="journal article" date="2006" name="J. Bacteriol.">
        <title>Whole-genome sequence of Listeria welshimeri reveals common steps in genome reduction with Listeria innocua as compared to Listeria monocytogenes.</title>
        <authorList>
            <person name="Hain T."/>
            <person name="Steinweg C."/>
            <person name="Kuenne C.T."/>
            <person name="Billion A."/>
            <person name="Ghai R."/>
            <person name="Chatterjee S.S."/>
            <person name="Domann E."/>
            <person name="Kaerst U."/>
            <person name="Goesmann A."/>
            <person name="Bekel T."/>
            <person name="Bartels D."/>
            <person name="Kaiser O."/>
            <person name="Meyer F."/>
            <person name="Puehler A."/>
            <person name="Weisshaar B."/>
            <person name="Wehland J."/>
            <person name="Liang C."/>
            <person name="Dandekar T."/>
            <person name="Lampidis R."/>
            <person name="Kreft J."/>
            <person name="Goebel W."/>
            <person name="Chakraborty T."/>
        </authorList>
    </citation>
    <scope>NUCLEOTIDE SEQUENCE [LARGE SCALE GENOMIC DNA]</scope>
    <source>
        <strain>ATCC 35897 / DSM 20650 / CCUG 15529 / CIP 8149 / NCTC 11857 / SLCC 5334 / V8</strain>
    </source>
</reference>
<protein>
    <recommendedName>
        <fullName evidence="1">Transcription elongation factor GreA</fullName>
    </recommendedName>
    <alternativeName>
        <fullName evidence="1">Transcript cleavage factor GreA</fullName>
    </alternativeName>
</protein>
<organism>
    <name type="scientific">Listeria welshimeri serovar 6b (strain ATCC 35897 / DSM 20650 / CCUG 15529 / CIP 8149 / NCTC 11857 / SLCC 5334 / V8)</name>
    <dbReference type="NCBI Taxonomy" id="386043"/>
    <lineage>
        <taxon>Bacteria</taxon>
        <taxon>Bacillati</taxon>
        <taxon>Bacillota</taxon>
        <taxon>Bacilli</taxon>
        <taxon>Bacillales</taxon>
        <taxon>Listeriaceae</taxon>
        <taxon>Listeria</taxon>
    </lineage>
</organism>
<name>GREA_LISW6</name>
<evidence type="ECO:0000255" key="1">
    <source>
        <dbReference type="HAMAP-Rule" id="MF_00105"/>
    </source>
</evidence>
<accession>A0AIU5</accession>
<keyword id="KW-0175">Coiled coil</keyword>
<keyword id="KW-0238">DNA-binding</keyword>
<keyword id="KW-0804">Transcription</keyword>
<keyword id="KW-0805">Transcription regulation</keyword>